<feature type="chain" id="PRO_0000381170" description="Biotin synthase">
    <location>
        <begin position="1"/>
        <end position="329"/>
    </location>
</feature>
<feature type="domain" description="Radical SAM core" evidence="2">
    <location>
        <begin position="38"/>
        <end position="262"/>
    </location>
</feature>
<feature type="binding site" evidence="1">
    <location>
        <position position="53"/>
    </location>
    <ligand>
        <name>[4Fe-4S] cluster</name>
        <dbReference type="ChEBI" id="CHEBI:49883"/>
        <note>4Fe-4S-S-AdoMet</note>
    </ligand>
</feature>
<feature type="binding site" evidence="1">
    <location>
        <position position="57"/>
    </location>
    <ligand>
        <name>[4Fe-4S] cluster</name>
        <dbReference type="ChEBI" id="CHEBI:49883"/>
        <note>4Fe-4S-S-AdoMet</note>
    </ligand>
</feature>
<feature type="binding site" evidence="1">
    <location>
        <position position="60"/>
    </location>
    <ligand>
        <name>[4Fe-4S] cluster</name>
        <dbReference type="ChEBI" id="CHEBI:49883"/>
        <note>4Fe-4S-S-AdoMet</note>
    </ligand>
</feature>
<feature type="binding site" evidence="1">
    <location>
        <position position="97"/>
    </location>
    <ligand>
        <name>[2Fe-2S] cluster</name>
        <dbReference type="ChEBI" id="CHEBI:190135"/>
    </ligand>
</feature>
<feature type="binding site" evidence="1">
    <location>
        <position position="128"/>
    </location>
    <ligand>
        <name>[2Fe-2S] cluster</name>
        <dbReference type="ChEBI" id="CHEBI:190135"/>
    </ligand>
</feature>
<feature type="binding site" evidence="1">
    <location>
        <position position="188"/>
    </location>
    <ligand>
        <name>[2Fe-2S] cluster</name>
        <dbReference type="ChEBI" id="CHEBI:190135"/>
    </ligand>
</feature>
<feature type="binding site" evidence="1">
    <location>
        <position position="260"/>
    </location>
    <ligand>
        <name>[2Fe-2S] cluster</name>
        <dbReference type="ChEBI" id="CHEBI:190135"/>
    </ligand>
</feature>
<organism>
    <name type="scientific">Acinetobacter baumannii (strain ACICU)</name>
    <dbReference type="NCBI Taxonomy" id="405416"/>
    <lineage>
        <taxon>Bacteria</taxon>
        <taxon>Pseudomonadati</taxon>
        <taxon>Pseudomonadota</taxon>
        <taxon>Gammaproteobacteria</taxon>
        <taxon>Moraxellales</taxon>
        <taxon>Moraxellaceae</taxon>
        <taxon>Acinetobacter</taxon>
        <taxon>Acinetobacter calcoaceticus/baumannii complex</taxon>
    </lineage>
</organism>
<name>BIOB_ACIBC</name>
<dbReference type="EC" id="2.8.1.6" evidence="1"/>
<dbReference type="EMBL" id="CP000863">
    <property type="protein sequence ID" value="ACC56866.1"/>
    <property type="molecule type" value="Genomic_DNA"/>
</dbReference>
<dbReference type="RefSeq" id="WP_000175360.1">
    <property type="nucleotide sequence ID" value="NZ_CP031380.1"/>
</dbReference>
<dbReference type="SMR" id="B2HYX9"/>
<dbReference type="KEGG" id="abc:ACICU_01554"/>
<dbReference type="HOGENOM" id="CLU_033172_1_2_6"/>
<dbReference type="UniPathway" id="UPA00078">
    <property type="reaction ID" value="UER00162"/>
</dbReference>
<dbReference type="Proteomes" id="UP000008839">
    <property type="component" value="Chromosome"/>
</dbReference>
<dbReference type="GO" id="GO:0051537">
    <property type="term" value="F:2 iron, 2 sulfur cluster binding"/>
    <property type="evidence" value="ECO:0007669"/>
    <property type="project" value="UniProtKB-KW"/>
</dbReference>
<dbReference type="GO" id="GO:0051539">
    <property type="term" value="F:4 iron, 4 sulfur cluster binding"/>
    <property type="evidence" value="ECO:0007669"/>
    <property type="project" value="UniProtKB-KW"/>
</dbReference>
<dbReference type="GO" id="GO:0004076">
    <property type="term" value="F:biotin synthase activity"/>
    <property type="evidence" value="ECO:0007669"/>
    <property type="project" value="UniProtKB-UniRule"/>
</dbReference>
<dbReference type="GO" id="GO:0005506">
    <property type="term" value="F:iron ion binding"/>
    <property type="evidence" value="ECO:0007669"/>
    <property type="project" value="UniProtKB-UniRule"/>
</dbReference>
<dbReference type="GO" id="GO:0009102">
    <property type="term" value="P:biotin biosynthetic process"/>
    <property type="evidence" value="ECO:0007669"/>
    <property type="project" value="UniProtKB-UniRule"/>
</dbReference>
<dbReference type="CDD" id="cd01335">
    <property type="entry name" value="Radical_SAM"/>
    <property type="match status" value="1"/>
</dbReference>
<dbReference type="FunFam" id="3.20.20.70:FF:000011">
    <property type="entry name" value="Biotin synthase"/>
    <property type="match status" value="1"/>
</dbReference>
<dbReference type="Gene3D" id="3.20.20.70">
    <property type="entry name" value="Aldolase class I"/>
    <property type="match status" value="1"/>
</dbReference>
<dbReference type="HAMAP" id="MF_01694">
    <property type="entry name" value="BioB"/>
    <property type="match status" value="1"/>
</dbReference>
<dbReference type="InterPro" id="IPR013785">
    <property type="entry name" value="Aldolase_TIM"/>
</dbReference>
<dbReference type="InterPro" id="IPR010722">
    <property type="entry name" value="BATS_dom"/>
</dbReference>
<dbReference type="InterPro" id="IPR002684">
    <property type="entry name" value="Biotin_synth/BioAB"/>
</dbReference>
<dbReference type="InterPro" id="IPR024177">
    <property type="entry name" value="Biotin_synthase"/>
</dbReference>
<dbReference type="InterPro" id="IPR006638">
    <property type="entry name" value="Elp3/MiaA/NifB-like_rSAM"/>
</dbReference>
<dbReference type="InterPro" id="IPR007197">
    <property type="entry name" value="rSAM"/>
</dbReference>
<dbReference type="NCBIfam" id="TIGR00433">
    <property type="entry name" value="bioB"/>
    <property type="match status" value="1"/>
</dbReference>
<dbReference type="PANTHER" id="PTHR22976">
    <property type="entry name" value="BIOTIN SYNTHASE"/>
    <property type="match status" value="1"/>
</dbReference>
<dbReference type="PANTHER" id="PTHR22976:SF2">
    <property type="entry name" value="BIOTIN SYNTHASE, MITOCHONDRIAL"/>
    <property type="match status" value="1"/>
</dbReference>
<dbReference type="Pfam" id="PF06968">
    <property type="entry name" value="BATS"/>
    <property type="match status" value="1"/>
</dbReference>
<dbReference type="Pfam" id="PF04055">
    <property type="entry name" value="Radical_SAM"/>
    <property type="match status" value="1"/>
</dbReference>
<dbReference type="PIRSF" id="PIRSF001619">
    <property type="entry name" value="Biotin_synth"/>
    <property type="match status" value="1"/>
</dbReference>
<dbReference type="SFLD" id="SFLDF00272">
    <property type="entry name" value="biotin_synthase"/>
    <property type="match status" value="1"/>
</dbReference>
<dbReference type="SFLD" id="SFLDS00029">
    <property type="entry name" value="Radical_SAM"/>
    <property type="match status" value="1"/>
</dbReference>
<dbReference type="SMART" id="SM00876">
    <property type="entry name" value="BATS"/>
    <property type="match status" value="1"/>
</dbReference>
<dbReference type="SMART" id="SM00729">
    <property type="entry name" value="Elp3"/>
    <property type="match status" value="1"/>
</dbReference>
<dbReference type="SUPFAM" id="SSF102114">
    <property type="entry name" value="Radical SAM enzymes"/>
    <property type="match status" value="1"/>
</dbReference>
<dbReference type="PROSITE" id="PS51918">
    <property type="entry name" value="RADICAL_SAM"/>
    <property type="match status" value="1"/>
</dbReference>
<protein>
    <recommendedName>
        <fullName evidence="1">Biotin synthase</fullName>
        <ecNumber evidence="1">2.8.1.6</ecNumber>
    </recommendedName>
</protein>
<proteinExistence type="inferred from homology"/>
<reference key="1">
    <citation type="journal article" date="2008" name="Antimicrob. Agents Chemother.">
        <title>Whole-genome pyrosequencing of an epidemic multidrug-resistant Acinetobacter baumannii strain belonging to the European clone II group.</title>
        <authorList>
            <person name="Iacono M."/>
            <person name="Villa L."/>
            <person name="Fortini D."/>
            <person name="Bordoni R."/>
            <person name="Imperi F."/>
            <person name="Bonnal R.J."/>
            <person name="Sicheritz-Ponten T."/>
            <person name="De Bellis G."/>
            <person name="Visca P."/>
            <person name="Cassone A."/>
            <person name="Carattoli A."/>
        </authorList>
    </citation>
    <scope>NUCLEOTIDE SEQUENCE [LARGE SCALE GENOMIC DNA]</scope>
    <source>
        <strain>ACICU</strain>
    </source>
</reference>
<keyword id="KW-0001">2Fe-2S</keyword>
<keyword id="KW-0004">4Fe-4S</keyword>
<keyword id="KW-0093">Biotin biosynthesis</keyword>
<keyword id="KW-0408">Iron</keyword>
<keyword id="KW-0411">Iron-sulfur</keyword>
<keyword id="KW-0479">Metal-binding</keyword>
<keyword id="KW-0949">S-adenosyl-L-methionine</keyword>
<keyword id="KW-0808">Transferase</keyword>
<accession>B2HYX9</accession>
<sequence length="329" mass="36659">MTLRNDWTREEIQALYEQPFLDLVFKAQQVHREHFTANTIQVSTLLSIKTGKCPEDCKYCSQSAHYDSKLEAEKRIAVEKVISEAKAAKDSGSSRFCMGAAWRNPHERDMPYVLEMVREVKALGMETCMTLGMLNQSQAERLKDAGLDYYNHNLDTSREYYSHIISTRTFDDRLNTLDYVRQAGMKVCSGGIVGLGESREDRIGLLHELATLPIHPESVPINMLVPIEGTPLADVEKLDVIEWIRTIAVARIIMPHSYIRLSAGRESLSDSDQALAFMAGANSLFSGDKLLTTPNAGEGKDQALFNKLGLTAEKPKPTVSDLSVDAMSA</sequence>
<gene>
    <name evidence="1" type="primary">bioB</name>
    <name type="ordered locus">ACICU_01554</name>
</gene>
<comment type="function">
    <text evidence="1">Catalyzes the conversion of dethiobiotin (DTB) to biotin by the insertion of a sulfur atom into dethiobiotin via a radical-based mechanism.</text>
</comment>
<comment type="catalytic activity">
    <reaction evidence="1">
        <text>(4R,5S)-dethiobiotin + (sulfur carrier)-SH + 2 reduced [2Fe-2S]-[ferredoxin] + 2 S-adenosyl-L-methionine = (sulfur carrier)-H + biotin + 2 5'-deoxyadenosine + 2 L-methionine + 2 oxidized [2Fe-2S]-[ferredoxin]</text>
        <dbReference type="Rhea" id="RHEA:22060"/>
        <dbReference type="Rhea" id="RHEA-COMP:10000"/>
        <dbReference type="Rhea" id="RHEA-COMP:10001"/>
        <dbReference type="Rhea" id="RHEA-COMP:14737"/>
        <dbReference type="Rhea" id="RHEA-COMP:14739"/>
        <dbReference type="ChEBI" id="CHEBI:17319"/>
        <dbReference type="ChEBI" id="CHEBI:29917"/>
        <dbReference type="ChEBI" id="CHEBI:33737"/>
        <dbReference type="ChEBI" id="CHEBI:33738"/>
        <dbReference type="ChEBI" id="CHEBI:57586"/>
        <dbReference type="ChEBI" id="CHEBI:57844"/>
        <dbReference type="ChEBI" id="CHEBI:59789"/>
        <dbReference type="ChEBI" id="CHEBI:64428"/>
        <dbReference type="ChEBI" id="CHEBI:149473"/>
        <dbReference type="EC" id="2.8.1.6"/>
    </reaction>
</comment>
<comment type="cofactor">
    <cofactor evidence="1">
        <name>[4Fe-4S] cluster</name>
        <dbReference type="ChEBI" id="CHEBI:49883"/>
    </cofactor>
    <text evidence="1">Binds 1 [4Fe-4S] cluster. The cluster is coordinated with 3 cysteines and an exchangeable S-adenosyl-L-methionine.</text>
</comment>
<comment type="cofactor">
    <cofactor evidence="1">
        <name>[2Fe-2S] cluster</name>
        <dbReference type="ChEBI" id="CHEBI:190135"/>
    </cofactor>
    <text evidence="1">Binds 1 [2Fe-2S] cluster. The cluster is coordinated with 3 cysteines and 1 arginine.</text>
</comment>
<comment type="pathway">
    <text evidence="1">Cofactor biosynthesis; biotin biosynthesis; biotin from 7,8-diaminononanoate: step 2/2.</text>
</comment>
<comment type="subunit">
    <text evidence="1">Homodimer.</text>
</comment>
<comment type="similarity">
    <text evidence="1">Belongs to the radical SAM superfamily. Biotin synthase family.</text>
</comment>
<evidence type="ECO:0000255" key="1">
    <source>
        <dbReference type="HAMAP-Rule" id="MF_01694"/>
    </source>
</evidence>
<evidence type="ECO:0000255" key="2">
    <source>
        <dbReference type="PROSITE-ProRule" id="PRU01266"/>
    </source>
</evidence>